<keyword id="KW-0238">DNA-binding</keyword>
<keyword id="KW-1185">Reference proteome</keyword>
<keyword id="KW-0749">Sporulation</keyword>
<comment type="function">
    <text evidence="1">SASP are bound to spore DNA. They are double-stranded DNA-binding proteins that cause DNA to change to an a-like conformation. They protect the DNA backbone from chemical and enzymatic cleavage and are thus involved in dormant spore's high resistance to UV light (By similarity).</text>
</comment>
<comment type="similarity">
    <text evidence="2">Belongs to the alpha/beta-type SASP family.</text>
</comment>
<dbReference type="EMBL" id="AE016877">
    <property type="protein sequence ID" value="AAP11553.1"/>
    <property type="molecule type" value="Genomic_DNA"/>
</dbReference>
<dbReference type="RefSeq" id="NP_834352.1">
    <property type="nucleotide sequence ID" value="NC_004722.1"/>
</dbReference>
<dbReference type="RefSeq" id="WP_000091640.1">
    <property type="nucleotide sequence ID" value="NZ_CP138336.1"/>
</dbReference>
<dbReference type="SMR" id="P0A4F4"/>
<dbReference type="STRING" id="226900.BC_4646"/>
<dbReference type="KEGG" id="bce:BC4646"/>
<dbReference type="PATRIC" id="fig|226900.8.peg.4810"/>
<dbReference type="HOGENOM" id="CLU_169738_2_0_9"/>
<dbReference type="OrthoDB" id="2627848at2"/>
<dbReference type="Proteomes" id="UP000001417">
    <property type="component" value="Chromosome"/>
</dbReference>
<dbReference type="GO" id="GO:0003690">
    <property type="term" value="F:double-stranded DNA binding"/>
    <property type="evidence" value="ECO:0007669"/>
    <property type="project" value="InterPro"/>
</dbReference>
<dbReference type="GO" id="GO:0006265">
    <property type="term" value="P:DNA topological change"/>
    <property type="evidence" value="ECO:0007669"/>
    <property type="project" value="InterPro"/>
</dbReference>
<dbReference type="GO" id="GO:0030435">
    <property type="term" value="P:sporulation resulting in formation of a cellular spore"/>
    <property type="evidence" value="ECO:0007669"/>
    <property type="project" value="UniProtKB-KW"/>
</dbReference>
<dbReference type="Gene3D" id="6.10.10.80">
    <property type="entry name" value="Small, acid-soluble spore protein, alpha/beta type-like"/>
    <property type="match status" value="1"/>
</dbReference>
<dbReference type="InterPro" id="IPR001448">
    <property type="entry name" value="SASP_alpha/beta-type"/>
</dbReference>
<dbReference type="InterPro" id="IPR018126">
    <property type="entry name" value="SASP_alpha/beta-type_CS"/>
</dbReference>
<dbReference type="InterPro" id="IPR050847">
    <property type="entry name" value="SASP_DNA-binding"/>
</dbReference>
<dbReference type="InterPro" id="IPR038300">
    <property type="entry name" value="SASP_sf_alpha/beta"/>
</dbReference>
<dbReference type="PANTHER" id="PTHR36107">
    <property type="entry name" value="SMALL, ACID-SOLUBLE SPORE PROTEIN A"/>
    <property type="match status" value="1"/>
</dbReference>
<dbReference type="PANTHER" id="PTHR36107:SF1">
    <property type="entry name" value="SMALL, ACID-SOLUBLE SPORE PROTEIN A"/>
    <property type="match status" value="1"/>
</dbReference>
<dbReference type="Pfam" id="PF00269">
    <property type="entry name" value="SASP"/>
    <property type="match status" value="1"/>
</dbReference>
<dbReference type="PROSITE" id="PS00304">
    <property type="entry name" value="SASP_1"/>
    <property type="match status" value="1"/>
</dbReference>
<dbReference type="PROSITE" id="PS00684">
    <property type="entry name" value="SASP_2"/>
    <property type="match status" value="1"/>
</dbReference>
<name>SAS2_BACCR</name>
<reference key="1">
    <citation type="journal article" date="2003" name="Nature">
        <title>Genome sequence of Bacillus cereus and comparative analysis with Bacillus anthracis.</title>
        <authorList>
            <person name="Ivanova N."/>
            <person name="Sorokin A."/>
            <person name="Anderson I."/>
            <person name="Galleron N."/>
            <person name="Candelon B."/>
            <person name="Kapatral V."/>
            <person name="Bhattacharyya A."/>
            <person name="Reznik G."/>
            <person name="Mikhailova N."/>
            <person name="Lapidus A."/>
            <person name="Chu L."/>
            <person name="Mazur M."/>
            <person name="Goltsman E."/>
            <person name="Larsen N."/>
            <person name="D'Souza M."/>
            <person name="Walunas T."/>
            <person name="Grechkin Y."/>
            <person name="Pusch G."/>
            <person name="Haselkorn R."/>
            <person name="Fonstein M."/>
            <person name="Ehrlich S.D."/>
            <person name="Overbeek R."/>
            <person name="Kyrpides N.C."/>
        </authorList>
    </citation>
    <scope>NUCLEOTIDE SEQUENCE [LARGE SCALE GENOMIC DNA]</scope>
    <source>
        <strain>ATCC 14579 / DSM 31 / CCUG 7414 / JCM 2152 / NBRC 15305 / NCIMB 9373 / NCTC 2599 / NRRL B-3711</strain>
    </source>
</reference>
<organism>
    <name type="scientific">Bacillus cereus (strain ATCC 14579 / DSM 31 / CCUG 7414 / JCM 2152 / NBRC 15305 / NCIMB 9373 / NCTC 2599 / NRRL B-3711)</name>
    <dbReference type="NCBI Taxonomy" id="226900"/>
    <lineage>
        <taxon>Bacteria</taxon>
        <taxon>Bacillati</taxon>
        <taxon>Bacillota</taxon>
        <taxon>Bacilli</taxon>
        <taxon>Bacillales</taxon>
        <taxon>Bacillaceae</taxon>
        <taxon>Bacillus</taxon>
        <taxon>Bacillus cereus group</taxon>
    </lineage>
</organism>
<gene>
    <name type="primary">sasP-2</name>
    <name type="ordered locus">BC_4646</name>
</gene>
<protein>
    <recommendedName>
        <fullName>Small, acid-soluble spore protein 2</fullName>
        <shortName>SASP</shortName>
    </recommendedName>
</protein>
<evidence type="ECO:0000250" key="1"/>
<evidence type="ECO:0000305" key="2"/>
<sequence length="65" mass="6842">MSRSTNKLAVPGAESALDQMKYEIAQEFGVQLGADATARANGSVGGEITKRLVSLAEQQLGGYQK</sequence>
<accession>P0A4F4</accession>
<accession>P06554</accession>
<proteinExistence type="inferred from homology"/>
<feature type="chain" id="PRO_0000196291" description="Small, acid-soluble spore protein 2">
    <location>
        <begin position="1"/>
        <end position="65"/>
    </location>
</feature>
<feature type="site" description="Cleavage; by spore protease">
    <location>
        <begin position="23"/>
        <end position="24"/>
    </location>
</feature>